<organism>
    <name type="scientific">Rattus norvegicus</name>
    <name type="common">Rat</name>
    <dbReference type="NCBI Taxonomy" id="10116"/>
    <lineage>
        <taxon>Eukaryota</taxon>
        <taxon>Metazoa</taxon>
        <taxon>Chordata</taxon>
        <taxon>Craniata</taxon>
        <taxon>Vertebrata</taxon>
        <taxon>Euteleostomi</taxon>
        <taxon>Mammalia</taxon>
        <taxon>Eutheria</taxon>
        <taxon>Euarchontoglires</taxon>
        <taxon>Glires</taxon>
        <taxon>Rodentia</taxon>
        <taxon>Myomorpha</taxon>
        <taxon>Muroidea</taxon>
        <taxon>Muridae</taxon>
        <taxon>Murinae</taxon>
        <taxon>Rattus</taxon>
    </lineage>
</organism>
<keyword id="KW-0007">Acetylation</keyword>
<keyword id="KW-0067">ATP-binding</keyword>
<keyword id="KW-1017">Isopeptide bond</keyword>
<keyword id="KW-0460">Magnesium</keyword>
<keyword id="KW-0479">Metal-binding</keyword>
<keyword id="KW-0547">Nucleotide-binding</keyword>
<keyword id="KW-0554">One-carbon metabolism</keyword>
<keyword id="KW-0597">Phosphoprotein</keyword>
<keyword id="KW-0630">Potassium</keyword>
<keyword id="KW-1185">Reference proteome</keyword>
<keyword id="KW-0808">Transferase</keyword>
<keyword id="KW-0832">Ubl conjugation</keyword>
<feature type="chain" id="PRO_0000174439" description="S-adenosylmethionine synthase isoform type-2">
    <location>
        <begin position="1"/>
        <end position="395"/>
    </location>
</feature>
<feature type="region of interest" description="Flexible loop" evidence="1">
    <location>
        <begin position="113"/>
        <end position="125"/>
    </location>
</feature>
<feature type="binding site" description="in other chain" evidence="2">
    <location>
        <position position="29"/>
    </location>
    <ligand>
        <name>ATP</name>
        <dbReference type="ChEBI" id="CHEBI:30616"/>
        <note>ligand shared between two neighboring subunits</note>
    </ligand>
</feature>
<feature type="binding site" evidence="2">
    <location>
        <position position="31"/>
    </location>
    <ligand>
        <name>Mg(2+)</name>
        <dbReference type="ChEBI" id="CHEBI:18420"/>
    </ligand>
</feature>
<feature type="binding site" evidence="1">
    <location>
        <position position="57"/>
    </location>
    <ligand>
        <name>K(+)</name>
        <dbReference type="ChEBI" id="CHEBI:29103"/>
    </ligand>
</feature>
<feature type="binding site" description="in other chain" evidence="2">
    <location>
        <position position="70"/>
    </location>
    <ligand>
        <name>L-methionine</name>
        <dbReference type="ChEBI" id="CHEBI:57844"/>
        <note>ligand shared between two neighboring subunits</note>
    </ligand>
</feature>
<feature type="binding site" description="in other chain" evidence="2">
    <location>
        <position position="113"/>
    </location>
    <ligand>
        <name>L-methionine</name>
        <dbReference type="ChEBI" id="CHEBI:57844"/>
        <note>ligand shared between two neighboring subunits</note>
    </ligand>
</feature>
<feature type="binding site" description="in other chain" evidence="2">
    <location>
        <begin position="179"/>
        <end position="181"/>
    </location>
    <ligand>
        <name>ATP</name>
        <dbReference type="ChEBI" id="CHEBI:30616"/>
        <note>ligand shared between two neighboring subunits</note>
    </ligand>
</feature>
<feature type="binding site" description="in other chain" evidence="2">
    <location>
        <begin position="247"/>
        <end position="250"/>
    </location>
    <ligand>
        <name>ATP</name>
        <dbReference type="ChEBI" id="CHEBI:30616"/>
        <note>ligand shared between two neighboring subunits</note>
    </ligand>
</feature>
<feature type="binding site" evidence="2">
    <location>
        <position position="258"/>
    </location>
    <ligand>
        <name>ATP</name>
        <dbReference type="ChEBI" id="CHEBI:30616"/>
        <note>ligand shared between two neighboring subunits</note>
    </ligand>
</feature>
<feature type="binding site" evidence="2">
    <location>
        <position position="258"/>
    </location>
    <ligand>
        <name>L-methionine</name>
        <dbReference type="ChEBI" id="CHEBI:57844"/>
        <note>ligand shared between two neighboring subunits</note>
    </ligand>
</feature>
<feature type="binding site" description="in other chain" evidence="2">
    <location>
        <begin position="264"/>
        <end position="265"/>
    </location>
    <ligand>
        <name>ATP</name>
        <dbReference type="ChEBI" id="CHEBI:30616"/>
        <note>ligand shared between two neighboring subunits</note>
    </ligand>
</feature>
<feature type="binding site" evidence="2">
    <location>
        <position position="281"/>
    </location>
    <ligand>
        <name>ATP</name>
        <dbReference type="ChEBI" id="CHEBI:30616"/>
        <note>ligand shared between two neighboring subunits</note>
    </ligand>
</feature>
<feature type="binding site" evidence="2">
    <location>
        <position position="285"/>
    </location>
    <ligand>
        <name>ATP</name>
        <dbReference type="ChEBI" id="CHEBI:30616"/>
        <note>ligand shared between two neighboring subunits</note>
    </ligand>
</feature>
<feature type="binding site" description="in other chain" evidence="1">
    <location>
        <position position="289"/>
    </location>
    <ligand>
        <name>L-methionine</name>
        <dbReference type="ChEBI" id="CHEBI:57844"/>
        <note>ligand shared between two neighboring subunits</note>
    </ligand>
</feature>
<feature type="binding site" evidence="2">
    <location>
        <position position="291"/>
    </location>
    <ligand>
        <name>ATP</name>
        <dbReference type="ChEBI" id="CHEBI:30616"/>
        <note>ligand shared between two neighboring subunits</note>
    </ligand>
</feature>
<feature type="modified residue" description="N6-acetyllysine" evidence="2">
    <location>
        <position position="81"/>
    </location>
</feature>
<feature type="modified residue" description="Phosphoserine" evidence="2">
    <location>
        <position position="114"/>
    </location>
</feature>
<feature type="modified residue" description="Phosphoserine" evidence="2">
    <location>
        <position position="384"/>
    </location>
</feature>
<feature type="cross-link" description="Glycyl lysine isopeptide (Lys-Gly) (interchain with G-Cter in SUMO2)" evidence="2">
    <location>
        <position position="228"/>
    </location>
</feature>
<feature type="cross-link" description="Glycyl lysine isopeptide (Lys-Gly) (interchain with G-Cter in SUMO2)" evidence="2">
    <location>
        <position position="234"/>
    </location>
</feature>
<dbReference type="EC" id="2.5.1.6" evidence="2"/>
<dbReference type="EMBL" id="J05571">
    <property type="protein sequence ID" value="AAA42106.1"/>
    <property type="molecule type" value="mRNA"/>
</dbReference>
<dbReference type="EMBL" id="AB000717">
    <property type="protein sequence ID" value="BAA19170.1"/>
    <property type="molecule type" value="Genomic_DNA"/>
</dbReference>
<dbReference type="PIR" id="A37118">
    <property type="entry name" value="A37118"/>
</dbReference>
<dbReference type="RefSeq" id="NP_599178.1">
    <property type="nucleotide sequence ID" value="NM_134351.1"/>
</dbReference>
<dbReference type="SMR" id="P18298"/>
<dbReference type="BioGRID" id="251193">
    <property type="interactions" value="1"/>
</dbReference>
<dbReference type="FunCoup" id="P18298">
    <property type="interactions" value="3358"/>
</dbReference>
<dbReference type="STRING" id="10116.ENSRNOP00000018170"/>
<dbReference type="BindingDB" id="P18298"/>
<dbReference type="ChEMBL" id="CHEMBL2838"/>
<dbReference type="CarbonylDB" id="P18298"/>
<dbReference type="iPTMnet" id="P18298"/>
<dbReference type="PhosphoSitePlus" id="P18298"/>
<dbReference type="jPOST" id="P18298"/>
<dbReference type="PaxDb" id="10116-ENSRNOP00000018170"/>
<dbReference type="GeneID" id="171347"/>
<dbReference type="KEGG" id="rno:171347"/>
<dbReference type="UCSC" id="RGD:619985">
    <property type="organism name" value="rat"/>
</dbReference>
<dbReference type="AGR" id="RGD:619985"/>
<dbReference type="CTD" id="4144"/>
<dbReference type="RGD" id="619985">
    <property type="gene designation" value="Mat2a"/>
</dbReference>
<dbReference type="eggNOG" id="KOG1506">
    <property type="taxonomic scope" value="Eukaryota"/>
</dbReference>
<dbReference type="InParanoid" id="P18298"/>
<dbReference type="OrthoDB" id="13973at9989"/>
<dbReference type="PhylomeDB" id="P18298"/>
<dbReference type="BRENDA" id="2.5.1.6">
    <property type="organism ID" value="5301"/>
</dbReference>
<dbReference type="Reactome" id="R-RNO-156581">
    <property type="pathway name" value="Methylation"/>
</dbReference>
<dbReference type="SABIO-RK" id="P18298"/>
<dbReference type="UniPathway" id="UPA00315">
    <property type="reaction ID" value="UER00080"/>
</dbReference>
<dbReference type="PRO" id="PR:P18298"/>
<dbReference type="Proteomes" id="UP000002494">
    <property type="component" value="Unplaced"/>
</dbReference>
<dbReference type="GO" id="GO:0005829">
    <property type="term" value="C:cytosol"/>
    <property type="evidence" value="ECO:0000318"/>
    <property type="project" value="GO_Central"/>
</dbReference>
<dbReference type="GO" id="GO:0048269">
    <property type="term" value="C:methionine adenosyltransferase complex"/>
    <property type="evidence" value="ECO:0000250"/>
    <property type="project" value="UniProtKB"/>
</dbReference>
<dbReference type="GO" id="GO:0016597">
    <property type="term" value="F:amino acid binding"/>
    <property type="evidence" value="ECO:0000314"/>
    <property type="project" value="RGD"/>
</dbReference>
<dbReference type="GO" id="GO:0005524">
    <property type="term" value="F:ATP binding"/>
    <property type="evidence" value="ECO:0000314"/>
    <property type="project" value="RGD"/>
</dbReference>
<dbReference type="GO" id="GO:0042802">
    <property type="term" value="F:identical protein binding"/>
    <property type="evidence" value="ECO:0000266"/>
    <property type="project" value="RGD"/>
</dbReference>
<dbReference type="GO" id="GO:0046872">
    <property type="term" value="F:metal ion binding"/>
    <property type="evidence" value="ECO:0007669"/>
    <property type="project" value="UniProtKB-KW"/>
</dbReference>
<dbReference type="GO" id="GO:0004478">
    <property type="term" value="F:methionine adenosyltransferase activity"/>
    <property type="evidence" value="ECO:0000314"/>
    <property type="project" value="RGD"/>
</dbReference>
<dbReference type="GO" id="GO:0036094">
    <property type="term" value="F:small molecule binding"/>
    <property type="evidence" value="ECO:0000266"/>
    <property type="project" value="RGD"/>
</dbReference>
<dbReference type="GO" id="GO:1990830">
    <property type="term" value="P:cellular response to leukemia inhibitory factor"/>
    <property type="evidence" value="ECO:0000266"/>
    <property type="project" value="RGD"/>
</dbReference>
<dbReference type="GO" id="GO:0061431">
    <property type="term" value="P:cellular response to methionine"/>
    <property type="evidence" value="ECO:0000266"/>
    <property type="project" value="RGD"/>
</dbReference>
<dbReference type="GO" id="GO:0007623">
    <property type="term" value="P:circadian rhythm"/>
    <property type="evidence" value="ECO:0000314"/>
    <property type="project" value="RGD"/>
</dbReference>
<dbReference type="GO" id="GO:0006730">
    <property type="term" value="P:one-carbon metabolic process"/>
    <property type="evidence" value="ECO:0007669"/>
    <property type="project" value="UniProtKB-KW"/>
</dbReference>
<dbReference type="GO" id="GO:1904263">
    <property type="term" value="P:positive regulation of TORC1 signaling"/>
    <property type="evidence" value="ECO:0000266"/>
    <property type="project" value="RGD"/>
</dbReference>
<dbReference type="GO" id="GO:0051291">
    <property type="term" value="P:protein heterooligomerization"/>
    <property type="evidence" value="ECO:0000250"/>
    <property type="project" value="UniProtKB"/>
</dbReference>
<dbReference type="GO" id="GO:0034214">
    <property type="term" value="P:protein hexamerization"/>
    <property type="evidence" value="ECO:0000250"/>
    <property type="project" value="UniProtKB"/>
</dbReference>
<dbReference type="GO" id="GO:0051591">
    <property type="term" value="P:response to cAMP"/>
    <property type="evidence" value="ECO:0000314"/>
    <property type="project" value="RGD"/>
</dbReference>
<dbReference type="GO" id="GO:0009725">
    <property type="term" value="P:response to hormone"/>
    <property type="evidence" value="ECO:0000314"/>
    <property type="project" value="RGD"/>
</dbReference>
<dbReference type="GO" id="GO:0009416">
    <property type="term" value="P:response to light stimulus"/>
    <property type="evidence" value="ECO:0000270"/>
    <property type="project" value="RGD"/>
</dbReference>
<dbReference type="GO" id="GO:0009410">
    <property type="term" value="P:response to xenobiotic stimulus"/>
    <property type="evidence" value="ECO:0000314"/>
    <property type="project" value="RGD"/>
</dbReference>
<dbReference type="GO" id="GO:0006556">
    <property type="term" value="P:S-adenosylmethionine biosynthetic process"/>
    <property type="evidence" value="ECO:0000314"/>
    <property type="project" value="RGD"/>
</dbReference>
<dbReference type="CDD" id="cd18079">
    <property type="entry name" value="S-AdoMet_synt"/>
    <property type="match status" value="1"/>
</dbReference>
<dbReference type="FunFam" id="3.30.300.10:FF:000001">
    <property type="entry name" value="S-adenosylmethionine synthase"/>
    <property type="match status" value="1"/>
</dbReference>
<dbReference type="FunFam" id="3.30.300.10:FF:000003">
    <property type="entry name" value="S-adenosylmethionine synthase"/>
    <property type="match status" value="1"/>
</dbReference>
<dbReference type="FunFam" id="3.30.300.10:FF:000004">
    <property type="entry name" value="S-adenosylmethionine synthase"/>
    <property type="match status" value="1"/>
</dbReference>
<dbReference type="Gene3D" id="3.30.300.10">
    <property type="match status" value="3"/>
</dbReference>
<dbReference type="HAMAP" id="MF_00086">
    <property type="entry name" value="S_AdoMet_synth1"/>
    <property type="match status" value="1"/>
</dbReference>
<dbReference type="InterPro" id="IPR022631">
    <property type="entry name" value="ADOMET_SYNTHASE_CS"/>
</dbReference>
<dbReference type="InterPro" id="IPR022630">
    <property type="entry name" value="S-AdoMet_synt_C"/>
</dbReference>
<dbReference type="InterPro" id="IPR022629">
    <property type="entry name" value="S-AdoMet_synt_central"/>
</dbReference>
<dbReference type="InterPro" id="IPR022628">
    <property type="entry name" value="S-AdoMet_synt_N"/>
</dbReference>
<dbReference type="InterPro" id="IPR002133">
    <property type="entry name" value="S-AdoMet_synthetase"/>
</dbReference>
<dbReference type="InterPro" id="IPR022636">
    <property type="entry name" value="S-AdoMet_synthetase_sfam"/>
</dbReference>
<dbReference type="NCBIfam" id="TIGR01034">
    <property type="entry name" value="metK"/>
    <property type="match status" value="1"/>
</dbReference>
<dbReference type="PANTHER" id="PTHR11964">
    <property type="entry name" value="S-ADENOSYLMETHIONINE SYNTHETASE"/>
    <property type="match status" value="1"/>
</dbReference>
<dbReference type="Pfam" id="PF02773">
    <property type="entry name" value="S-AdoMet_synt_C"/>
    <property type="match status" value="1"/>
</dbReference>
<dbReference type="Pfam" id="PF02772">
    <property type="entry name" value="S-AdoMet_synt_M"/>
    <property type="match status" value="1"/>
</dbReference>
<dbReference type="Pfam" id="PF00438">
    <property type="entry name" value="S-AdoMet_synt_N"/>
    <property type="match status" value="1"/>
</dbReference>
<dbReference type="PIRSF" id="PIRSF000497">
    <property type="entry name" value="MAT"/>
    <property type="match status" value="1"/>
</dbReference>
<dbReference type="SUPFAM" id="SSF55973">
    <property type="entry name" value="S-adenosylmethionine synthetase"/>
    <property type="match status" value="3"/>
</dbReference>
<dbReference type="PROSITE" id="PS00376">
    <property type="entry name" value="ADOMET_SYNTHASE_1"/>
    <property type="match status" value="1"/>
</dbReference>
<dbReference type="PROSITE" id="PS00377">
    <property type="entry name" value="ADOMET_SYNTHASE_2"/>
    <property type="match status" value="1"/>
</dbReference>
<gene>
    <name type="primary">Mat2a</name>
    <name type="synonym">Ams2</name>
</gene>
<sequence>MNGQLNGFHEAFIEEGTFLFTSESVGEGHPDKICDQINDAVLDAHLQQDPDAKVACETVAKTGMILLAGEITSRAAIDYQKVVREAIKHIGYDDSSKGFDYKTCNVLVALEQQSPDIAQGVHLDRNEEDIGAGDQGLMFGYATDETEECMPLTIVLAHKLNAKLAELRRNGTLPWLRPDSKTQVTVQYMQDRGAVIPIRVHTIVISVQHDEEVCLDEMRDALKEKLIKAVVPAKYLDEDTIYHLQPSGRFVIGGPQGDAGLTGRKIIVDTYGGWGAHGGGAFSGKDYTKVDRSAAYAARWVAKSLVKGGLCRRVLVQVSYAIGVSHPLSISIFHYGTSQKSERELLEIVKNNFDLRPGVIVRDLDLKKPIYQRTAAYGHFGRDSFPWEVPKKLKY</sequence>
<name>METK2_RAT</name>
<accession>P18298</accession>
<reference key="1">
    <citation type="journal article" date="1990" name="J. Biol. Chem.">
        <title>Molecular cloning and nucleotide sequence of cDNA encoding the rat kidney S-adenosylmethionine synthetase.</title>
        <authorList>
            <person name="Horikawa S."/>
            <person name="Sasuga J."/>
            <person name="Shimizu K."/>
            <person name="Ozasa H."/>
            <person name="Tsukada K."/>
        </authorList>
    </citation>
    <scope>NUCLEOTIDE SEQUENCE [MRNA]</scope>
    <source>
        <strain>Wistar</strain>
        <tissue>Kidney</tissue>
    </source>
</reference>
<reference key="2">
    <citation type="journal article" date="1997" name="Eur. J. Biochem.">
        <title>Structure of the rat methionine adenosyltransferase 2A gene and its promoter.</title>
        <authorList>
            <person name="Hiroki T."/>
            <person name="Horikawa S."/>
            <person name="Tsukada K."/>
        </authorList>
    </citation>
    <scope>NUCLEOTIDE SEQUENCE [GENOMIC DNA]</scope>
</reference>
<reference key="3">
    <citation type="journal article" date="2005" name="J. Biol. Chem.">
        <title>Methionine adenosyltransferase:adrenergic-cAMP mechanism regulates a daily rhythm in pineal expression.</title>
        <authorList>
            <person name="Kim J.S."/>
            <person name="Coon S.L."/>
            <person name="Blackshaw S."/>
            <person name="Cepko C.L."/>
            <person name="Moller M."/>
            <person name="Mukda S."/>
            <person name="Zhao W.Q."/>
            <person name="Charlton C.G."/>
            <person name="Klein D.C."/>
        </authorList>
    </citation>
    <scope>TISSUE SPECIFICITY</scope>
    <scope>INDUCTION</scope>
</reference>
<reference key="4">
    <citation type="journal article" date="2009" name="J. Biol. Chem.">
        <title>Night/day changes in pineal expression of &gt;600 genes: central role of adrenergic/cAMP signaling.</title>
        <authorList>
            <person name="Bailey M.J."/>
            <person name="Coon S.L."/>
            <person name="Carter D.A."/>
            <person name="Humphries A."/>
            <person name="Kim J.S."/>
            <person name="Shi Q."/>
            <person name="Gaildrat P."/>
            <person name="Morin F."/>
            <person name="Ganguly S."/>
            <person name="Hogenesch J.B."/>
            <person name="Weller J.L."/>
            <person name="Rath M.F."/>
            <person name="Moller M."/>
            <person name="Baler R."/>
            <person name="Sugden D."/>
            <person name="Rangel Z.G."/>
            <person name="Munson P.J."/>
            <person name="Klein D.C."/>
        </authorList>
    </citation>
    <scope>TISSUE SPECIFICITY</scope>
    <scope>INDUCTION</scope>
</reference>
<comment type="function">
    <text evidence="2">Catalyzes the formation of S-adenosylmethionine from methionine and ATP. The reaction comprises two steps that are both catalyzed by the same enzyme: formation of S-adenosylmethionine (AdoMet) and triphosphate, and subsequent hydrolysis of the triphosphate.</text>
</comment>
<comment type="catalytic activity">
    <reaction evidence="2">
        <text>L-methionine + ATP + H2O = S-adenosyl-L-methionine + phosphate + diphosphate</text>
        <dbReference type="Rhea" id="RHEA:21080"/>
        <dbReference type="ChEBI" id="CHEBI:15377"/>
        <dbReference type="ChEBI" id="CHEBI:30616"/>
        <dbReference type="ChEBI" id="CHEBI:33019"/>
        <dbReference type="ChEBI" id="CHEBI:43474"/>
        <dbReference type="ChEBI" id="CHEBI:57844"/>
        <dbReference type="ChEBI" id="CHEBI:59789"/>
        <dbReference type="EC" id="2.5.1.6"/>
    </reaction>
</comment>
<comment type="cofactor">
    <cofactor evidence="1">
        <name>Mg(2+)</name>
        <dbReference type="ChEBI" id="CHEBI:18420"/>
    </cofactor>
    <text evidence="2">Binds 2 magnesium ions per subunit. The magnesium ions interact primarily with the substrate.</text>
</comment>
<comment type="cofactor">
    <cofactor evidence="1">
        <name>K(+)</name>
        <dbReference type="ChEBI" id="CHEBI:29103"/>
    </cofactor>
    <text evidence="2">Binds 1 potassium ion per subunit. The potassium ion interacts primarily with the substrate.</text>
</comment>
<comment type="pathway">
    <text evidence="2">Amino-acid biosynthesis; S-adenosyl-L-methionine biosynthesis; S-adenosyl-L-methionine from L-methionine: step 1/1.</text>
</comment>
<comment type="subunit">
    <text evidence="2">Heterotrimer; composed of a catalytic MAT2A homodimer that binds one regulatory MAT2B chain. Heterohexamer; composed of a central, catalytic MAT2A homotetramer flanked on either side by a regulatory MAT2B chain.</text>
</comment>
<comment type="tissue specificity">
    <text evidence="3 4">In mammalian tissues, there are three distinct forms of AdoMet synthases designated as alpha, beta, and gamma. Alpha and beta are expressed only in adult liver, while gamma is widely distributed in extrahepatic tissues. In addition, the gamma form predominantly exists in fetal rat liver and is progressively replaced by the alpha and beta forms during development. In the brain, highly expressed at night in pinealocytes (at protein level). Low expression in the medial habenular nucleus, granular layer of the cerebellum, layer II of the neocortex and the pyramidal cells and granular cells of the hippocampal formation.</text>
</comment>
<comment type="induction">
    <text evidence="3 4">Exhibits night/day variations with a 5-fold increased expression at night in the pineal gland (at protein level). Up-regulation is due to a large degree to the release of norepinephrine from nerve terminals in the pineal gland and cAMP signaling pathway.</text>
</comment>
<comment type="similarity">
    <text evidence="5">Belongs to the AdoMet synthase family.</text>
</comment>
<proteinExistence type="evidence at protein level"/>
<protein>
    <recommendedName>
        <fullName>S-adenosylmethionine synthase isoform type-2</fullName>
        <shortName>AdoMet synthase 2</shortName>
        <ecNumber evidence="2">2.5.1.6</ecNumber>
    </recommendedName>
    <alternativeName>
        <fullName>Methionine adenosyltransferase 2</fullName>
        <shortName>MAT 2</shortName>
    </alternativeName>
    <alternativeName>
        <fullName>Methionine adenosyltransferase II</fullName>
        <shortName>MAT-II</shortName>
    </alternativeName>
</protein>
<evidence type="ECO:0000250" key="1">
    <source>
        <dbReference type="UniProtKB" id="P0A817"/>
    </source>
</evidence>
<evidence type="ECO:0000250" key="2">
    <source>
        <dbReference type="UniProtKB" id="P31153"/>
    </source>
</evidence>
<evidence type="ECO:0000269" key="3">
    <source>
    </source>
</evidence>
<evidence type="ECO:0000269" key="4">
    <source>
    </source>
</evidence>
<evidence type="ECO:0000305" key="5"/>